<feature type="initiator methionine" description="Removed" evidence="1">
    <location>
        <position position="1"/>
    </location>
</feature>
<feature type="chain" id="PRO_0000268907" description="Sigma factor-binding protein Crl">
    <location>
        <begin position="2"/>
        <end position="133"/>
    </location>
</feature>
<feature type="region of interest" description="Essential for activity" evidence="2">
    <location>
        <begin position="99"/>
        <end position="122"/>
    </location>
</feature>
<feature type="coiled-coil region" evidence="2">
    <location>
        <begin position="90"/>
        <end position="116"/>
    </location>
</feature>
<accession>Q83SI1</accession>
<accession>Q7C311</accession>
<protein>
    <recommendedName>
        <fullName evidence="2">Sigma factor-binding protein Crl</fullName>
    </recommendedName>
</protein>
<reference key="1">
    <citation type="journal article" date="2002" name="Nucleic Acids Res.">
        <title>Genome sequence of Shigella flexneri 2a: insights into pathogenicity through comparison with genomes of Escherichia coli K12 and O157.</title>
        <authorList>
            <person name="Jin Q."/>
            <person name="Yuan Z."/>
            <person name="Xu J."/>
            <person name="Wang Y."/>
            <person name="Shen Y."/>
            <person name="Lu W."/>
            <person name="Wang J."/>
            <person name="Liu H."/>
            <person name="Yang J."/>
            <person name="Yang F."/>
            <person name="Zhang X."/>
            <person name="Zhang J."/>
            <person name="Yang G."/>
            <person name="Wu H."/>
            <person name="Qu D."/>
            <person name="Dong J."/>
            <person name="Sun L."/>
            <person name="Xue Y."/>
            <person name="Zhao A."/>
            <person name="Gao Y."/>
            <person name="Zhu J."/>
            <person name="Kan B."/>
            <person name="Ding K."/>
            <person name="Chen S."/>
            <person name="Cheng H."/>
            <person name="Yao Z."/>
            <person name="He B."/>
            <person name="Chen R."/>
            <person name="Ma D."/>
            <person name="Qiang B."/>
            <person name="Wen Y."/>
            <person name="Hou Y."/>
            <person name="Yu J."/>
        </authorList>
    </citation>
    <scope>NUCLEOTIDE SEQUENCE [LARGE SCALE GENOMIC DNA]</scope>
    <source>
        <strain>301 / Serotype 2a</strain>
    </source>
</reference>
<reference key="2">
    <citation type="journal article" date="2003" name="Infect. Immun.">
        <title>Complete genome sequence and comparative genomics of Shigella flexneri serotype 2a strain 2457T.</title>
        <authorList>
            <person name="Wei J."/>
            <person name="Goldberg M.B."/>
            <person name="Burland V."/>
            <person name="Venkatesan M.M."/>
            <person name="Deng W."/>
            <person name="Fournier G."/>
            <person name="Mayhew G.F."/>
            <person name="Plunkett G. III"/>
            <person name="Rose D.J."/>
            <person name="Darling A."/>
            <person name="Mau B."/>
            <person name="Perna N.T."/>
            <person name="Payne S.M."/>
            <person name="Runyen-Janecky L.J."/>
            <person name="Zhou S."/>
            <person name="Schwartz D.C."/>
            <person name="Blattner F.R."/>
        </authorList>
    </citation>
    <scope>NUCLEOTIDE SEQUENCE [LARGE SCALE GENOMIC DNA]</scope>
    <source>
        <strain>ATCC 700930 / 2457T / Serotype 2a</strain>
    </source>
</reference>
<proteinExistence type="inferred from homology"/>
<gene>
    <name evidence="2" type="primary">crl</name>
    <name type="ordered locus">SF0288</name>
    <name type="ordered locus">S0309</name>
</gene>
<keyword id="KW-0010">Activator</keyword>
<keyword id="KW-0175">Coiled coil</keyword>
<keyword id="KW-0963">Cytoplasm</keyword>
<keyword id="KW-1185">Reference proteome</keyword>
<keyword id="KW-0804">Transcription</keyword>
<keyword id="KW-0805">Transcription regulation</keyword>
<comment type="function">
    <text evidence="2">Binds to the sigma-S subunit of RNA polymerase, activating expression of sigma-S-regulated genes. Stimulates RNA polymerase holoenzyme formation and may bind to several other sigma factors, such as sigma-70 and sigma-32.</text>
</comment>
<comment type="subcellular location">
    <subcellularLocation>
        <location evidence="2">Cytoplasm</location>
    </subcellularLocation>
</comment>
<comment type="similarity">
    <text evidence="2">Belongs to the Crl family.</text>
</comment>
<evidence type="ECO:0000250" key="1"/>
<evidence type="ECO:0000255" key="2">
    <source>
        <dbReference type="HAMAP-Rule" id="MF_01178"/>
    </source>
</evidence>
<name>CRL_SHIFL</name>
<organism>
    <name type="scientific">Shigella flexneri</name>
    <dbReference type="NCBI Taxonomy" id="623"/>
    <lineage>
        <taxon>Bacteria</taxon>
        <taxon>Pseudomonadati</taxon>
        <taxon>Pseudomonadota</taxon>
        <taxon>Gammaproteobacteria</taxon>
        <taxon>Enterobacterales</taxon>
        <taxon>Enterobacteriaceae</taxon>
        <taxon>Shigella</taxon>
    </lineage>
</organism>
<dbReference type="EMBL" id="AE005674">
    <property type="protein sequence ID" value="AAN41947.1"/>
    <property type="molecule type" value="Genomic_DNA"/>
</dbReference>
<dbReference type="EMBL" id="AE014073">
    <property type="protein sequence ID" value="AAP15834.1"/>
    <property type="molecule type" value="Genomic_DNA"/>
</dbReference>
<dbReference type="RefSeq" id="NP_706240.1">
    <property type="nucleotide sequence ID" value="NC_004337.2"/>
</dbReference>
<dbReference type="RefSeq" id="WP_000174678.1">
    <property type="nucleotide sequence ID" value="NZ_WPGW01000070.1"/>
</dbReference>
<dbReference type="SMR" id="Q83SI1"/>
<dbReference type="STRING" id="198214.SF0288"/>
<dbReference type="PaxDb" id="198214-SF0288"/>
<dbReference type="GeneID" id="1024314"/>
<dbReference type="KEGG" id="sfl:SF0288"/>
<dbReference type="KEGG" id="sfx:S0309"/>
<dbReference type="PATRIC" id="fig|198214.7.peg.329"/>
<dbReference type="HOGENOM" id="CLU_136773_0_0_6"/>
<dbReference type="Proteomes" id="UP000001006">
    <property type="component" value="Chromosome"/>
</dbReference>
<dbReference type="Proteomes" id="UP000002673">
    <property type="component" value="Chromosome"/>
</dbReference>
<dbReference type="GO" id="GO:0005737">
    <property type="term" value="C:cytoplasm"/>
    <property type="evidence" value="ECO:0007669"/>
    <property type="project" value="UniProtKB-SubCell"/>
</dbReference>
<dbReference type="GO" id="GO:0045893">
    <property type="term" value="P:positive regulation of DNA-templated transcription"/>
    <property type="evidence" value="ECO:0007669"/>
    <property type="project" value="UniProtKB-UniRule"/>
</dbReference>
<dbReference type="FunFam" id="3.30.310.230:FF:000001">
    <property type="entry name" value="Sigma factor-binding protein Crl"/>
    <property type="match status" value="1"/>
</dbReference>
<dbReference type="Gene3D" id="3.30.310.230">
    <property type="entry name" value="Sigma factor-binding protein Crl monomer"/>
    <property type="match status" value="1"/>
</dbReference>
<dbReference type="HAMAP" id="MF_01178">
    <property type="entry name" value="Crl"/>
    <property type="match status" value="1"/>
</dbReference>
<dbReference type="InterPro" id="IPR009986">
    <property type="entry name" value="Tscrpt_reg_Crl"/>
</dbReference>
<dbReference type="InterPro" id="IPR038208">
    <property type="entry name" value="Tscrpt_reg_Crl_sf"/>
</dbReference>
<dbReference type="NCBIfam" id="NF008217">
    <property type="entry name" value="PRK10984.1"/>
    <property type="match status" value="1"/>
</dbReference>
<dbReference type="Pfam" id="PF07417">
    <property type="entry name" value="Crl"/>
    <property type="match status" value="1"/>
</dbReference>
<sequence>MTLPSGHPKSRLIKKFTALGPYIREGKCEDNRFFFDCLAVCVNVKPAPEVREFWGWWMELEAQESRFTYSYQFGLFDKAGDWKSVPVKDTEVVERLEHTLREFHEKLRELLTTLNLKLEPANDFRDEPVKLTA</sequence>